<name>Y452_MYCGE</name>
<evidence type="ECO:0000255" key="1"/>
<evidence type="ECO:0000305" key="2"/>
<proteinExistence type="predicted"/>
<reference key="1">
    <citation type="journal article" date="1995" name="Science">
        <title>The minimal gene complement of Mycoplasma genitalium.</title>
        <authorList>
            <person name="Fraser C.M."/>
            <person name="Gocayne J.D."/>
            <person name="White O."/>
            <person name="Adams M.D."/>
            <person name="Clayton R.A."/>
            <person name="Fleischmann R.D."/>
            <person name="Bult C.J."/>
            <person name="Kerlavage A.R."/>
            <person name="Sutton G.G."/>
            <person name="Kelley J.M."/>
            <person name="Fritchman J.L."/>
            <person name="Weidman J.F."/>
            <person name="Small K.V."/>
            <person name="Sandusky M."/>
            <person name="Fuhrmann J.L."/>
            <person name="Nguyen D.T."/>
            <person name="Utterback T.R."/>
            <person name="Saudek D.M."/>
            <person name="Phillips C.A."/>
            <person name="Merrick J.M."/>
            <person name="Tomb J.-F."/>
            <person name="Dougherty B.A."/>
            <person name="Bott K.F."/>
            <person name="Hu P.-C."/>
            <person name="Lucier T.S."/>
            <person name="Peterson S.N."/>
            <person name="Smith H.O."/>
            <person name="Hutchison C.A. III"/>
            <person name="Venter J.C."/>
        </authorList>
    </citation>
    <scope>NUCLEOTIDE SEQUENCE [LARGE SCALE GENOMIC DNA]</scope>
    <source>
        <strain>ATCC 33530 / DSM 19775 / NCTC 10195 / G37</strain>
    </source>
</reference>
<organism>
    <name type="scientific">Mycoplasma genitalium (strain ATCC 33530 / DSM 19775 / NCTC 10195 / G37)</name>
    <name type="common">Mycoplasmoides genitalium</name>
    <dbReference type="NCBI Taxonomy" id="243273"/>
    <lineage>
        <taxon>Bacteria</taxon>
        <taxon>Bacillati</taxon>
        <taxon>Mycoplasmatota</taxon>
        <taxon>Mycoplasmoidales</taxon>
        <taxon>Mycoplasmoidaceae</taxon>
        <taxon>Mycoplasmoides</taxon>
    </lineage>
</organism>
<accession>P47690</accession>
<feature type="chain" id="PRO_0000210623" description="Uncharacterized protein MG452">
    <location>
        <begin position="1"/>
        <end position="261"/>
    </location>
</feature>
<feature type="transmembrane region" description="Helical" evidence="1">
    <location>
        <begin position="31"/>
        <end position="51"/>
    </location>
</feature>
<feature type="transmembrane region" description="Helical" evidence="1">
    <location>
        <begin position="71"/>
        <end position="91"/>
    </location>
</feature>
<feature type="transmembrane region" description="Helical" evidence="1">
    <location>
        <begin position="101"/>
        <end position="121"/>
    </location>
</feature>
<feature type="transmembrane region" description="Helical" evidence="1">
    <location>
        <begin position="130"/>
        <end position="150"/>
    </location>
</feature>
<feature type="transmembrane region" description="Helical" evidence="1">
    <location>
        <begin position="167"/>
        <end position="187"/>
    </location>
</feature>
<feature type="transmembrane region" description="Helical" evidence="1">
    <location>
        <begin position="213"/>
        <end position="233"/>
    </location>
</feature>
<protein>
    <recommendedName>
        <fullName>Uncharacterized protein MG452</fullName>
    </recommendedName>
</protein>
<comment type="subcellular location">
    <subcellularLocation>
        <location evidence="2">Cell membrane</location>
        <topology evidence="2">Multi-pass membrane protein</topology>
    </subcellularLocation>
</comment>
<sequence>MLIIFKDLNLVKTNNCQIIGWWKQLSLPQKTFLSFIPLFLVTSAFVLTGIVESLLTFGTIIEQIDKFTDQTNVMLLIYAVIYTFNPKSWLLKNQQFFLSALAYILFTFIGYNLILSIAGIAYKSTNPYKLTSSIFLHVIAPIAFFIASFIKIKHEKDVNINMFFKSLLLFMIYPLIYGLYLVTIPYVRHYLFNGRPSTYTIYGSITNTKNNPFAWLVVFAVLFIYFPLSYLAIYLLQLKLIKKAIQPQFNLPFTLNKWKQK</sequence>
<keyword id="KW-1003">Cell membrane</keyword>
<keyword id="KW-0472">Membrane</keyword>
<keyword id="KW-1185">Reference proteome</keyword>
<keyword id="KW-0812">Transmembrane</keyword>
<keyword id="KW-1133">Transmembrane helix</keyword>
<dbReference type="EMBL" id="L43967">
    <property type="protein sequence ID" value="AAC72472.1"/>
    <property type="molecule type" value="Genomic_DNA"/>
</dbReference>
<dbReference type="PIR" id="I64249">
    <property type="entry name" value="I64249"/>
</dbReference>
<dbReference type="STRING" id="243273.MG_452"/>
<dbReference type="KEGG" id="mge:MG_452"/>
<dbReference type="eggNOG" id="ENOG5032QFI">
    <property type="taxonomic scope" value="Bacteria"/>
</dbReference>
<dbReference type="HOGENOM" id="CLU_091666_0_0_14"/>
<dbReference type="InParanoid" id="P47690"/>
<dbReference type="OrthoDB" id="399197at2"/>
<dbReference type="BioCyc" id="MGEN243273:G1GJ2-545-MONOMER"/>
<dbReference type="Proteomes" id="UP000000807">
    <property type="component" value="Chromosome"/>
</dbReference>
<dbReference type="GO" id="GO:0005886">
    <property type="term" value="C:plasma membrane"/>
    <property type="evidence" value="ECO:0007669"/>
    <property type="project" value="UniProtKB-SubCell"/>
</dbReference>
<dbReference type="InterPro" id="IPR011631">
    <property type="entry name" value="DUF1600"/>
</dbReference>
<dbReference type="Pfam" id="PF07667">
    <property type="entry name" value="DUF1600"/>
    <property type="match status" value="1"/>
</dbReference>
<dbReference type="PIRSF" id="PIRSF006834">
    <property type="entry name" value="UCP006834"/>
    <property type="match status" value="1"/>
</dbReference>
<gene>
    <name type="ordered locus">MG452</name>
</gene>